<reference key="1">
    <citation type="journal article" date="2002" name="Nature">
        <title>The genome sequence of Schizosaccharomyces pombe.</title>
        <authorList>
            <person name="Wood V."/>
            <person name="Gwilliam R."/>
            <person name="Rajandream M.A."/>
            <person name="Lyne M.H."/>
            <person name="Lyne R."/>
            <person name="Stewart A."/>
            <person name="Sgouros J.G."/>
            <person name="Peat N."/>
            <person name="Hayles J."/>
            <person name="Baker S.G."/>
            <person name="Basham D."/>
            <person name="Bowman S."/>
            <person name="Brooks K."/>
            <person name="Brown D."/>
            <person name="Brown S."/>
            <person name="Chillingworth T."/>
            <person name="Churcher C.M."/>
            <person name="Collins M."/>
            <person name="Connor R."/>
            <person name="Cronin A."/>
            <person name="Davis P."/>
            <person name="Feltwell T."/>
            <person name="Fraser A."/>
            <person name="Gentles S."/>
            <person name="Goble A."/>
            <person name="Hamlin N."/>
            <person name="Harris D.E."/>
            <person name="Hidalgo J."/>
            <person name="Hodgson G."/>
            <person name="Holroyd S."/>
            <person name="Hornsby T."/>
            <person name="Howarth S."/>
            <person name="Huckle E.J."/>
            <person name="Hunt S."/>
            <person name="Jagels K."/>
            <person name="James K.D."/>
            <person name="Jones L."/>
            <person name="Jones M."/>
            <person name="Leather S."/>
            <person name="McDonald S."/>
            <person name="McLean J."/>
            <person name="Mooney P."/>
            <person name="Moule S."/>
            <person name="Mungall K.L."/>
            <person name="Murphy L.D."/>
            <person name="Niblett D."/>
            <person name="Odell C."/>
            <person name="Oliver K."/>
            <person name="O'Neil S."/>
            <person name="Pearson D."/>
            <person name="Quail M.A."/>
            <person name="Rabbinowitsch E."/>
            <person name="Rutherford K.M."/>
            <person name="Rutter S."/>
            <person name="Saunders D."/>
            <person name="Seeger K."/>
            <person name="Sharp S."/>
            <person name="Skelton J."/>
            <person name="Simmonds M.N."/>
            <person name="Squares R."/>
            <person name="Squares S."/>
            <person name="Stevens K."/>
            <person name="Taylor K."/>
            <person name="Taylor R.G."/>
            <person name="Tivey A."/>
            <person name="Walsh S.V."/>
            <person name="Warren T."/>
            <person name="Whitehead S."/>
            <person name="Woodward J.R."/>
            <person name="Volckaert G."/>
            <person name="Aert R."/>
            <person name="Robben J."/>
            <person name="Grymonprez B."/>
            <person name="Weltjens I."/>
            <person name="Vanstreels E."/>
            <person name="Rieger M."/>
            <person name="Schaefer M."/>
            <person name="Mueller-Auer S."/>
            <person name="Gabel C."/>
            <person name="Fuchs M."/>
            <person name="Duesterhoeft A."/>
            <person name="Fritzc C."/>
            <person name="Holzer E."/>
            <person name="Moestl D."/>
            <person name="Hilbert H."/>
            <person name="Borzym K."/>
            <person name="Langer I."/>
            <person name="Beck A."/>
            <person name="Lehrach H."/>
            <person name="Reinhardt R."/>
            <person name="Pohl T.M."/>
            <person name="Eger P."/>
            <person name="Zimmermann W."/>
            <person name="Wedler H."/>
            <person name="Wambutt R."/>
            <person name="Purnelle B."/>
            <person name="Goffeau A."/>
            <person name="Cadieu E."/>
            <person name="Dreano S."/>
            <person name="Gloux S."/>
            <person name="Lelaure V."/>
            <person name="Mottier S."/>
            <person name="Galibert F."/>
            <person name="Aves S.J."/>
            <person name="Xiang Z."/>
            <person name="Hunt C."/>
            <person name="Moore K."/>
            <person name="Hurst S.M."/>
            <person name="Lucas M."/>
            <person name="Rochet M."/>
            <person name="Gaillardin C."/>
            <person name="Tallada V.A."/>
            <person name="Garzon A."/>
            <person name="Thode G."/>
            <person name="Daga R.R."/>
            <person name="Cruzado L."/>
            <person name="Jimenez J."/>
            <person name="Sanchez M."/>
            <person name="del Rey F."/>
            <person name="Benito J."/>
            <person name="Dominguez A."/>
            <person name="Revuelta J.L."/>
            <person name="Moreno S."/>
            <person name="Armstrong J."/>
            <person name="Forsburg S.L."/>
            <person name="Cerutti L."/>
            <person name="Lowe T."/>
            <person name="McCombie W.R."/>
            <person name="Paulsen I."/>
            <person name="Potashkin J."/>
            <person name="Shpakovski G.V."/>
            <person name="Ussery D."/>
            <person name="Barrell B.G."/>
            <person name="Nurse P."/>
        </authorList>
    </citation>
    <scope>NUCLEOTIDE SEQUENCE [LARGE SCALE GENOMIC DNA]</scope>
    <source>
        <strain>972 / ATCC 24843</strain>
    </source>
</reference>
<reference key="2">
    <citation type="journal article" date="2011" name="Science">
        <title>Comparative functional genomics of the fission yeasts.</title>
        <authorList>
            <person name="Rhind N."/>
            <person name="Chen Z."/>
            <person name="Yassour M."/>
            <person name="Thompson D.A."/>
            <person name="Haas B.J."/>
            <person name="Habib N."/>
            <person name="Wapinski I."/>
            <person name="Roy S."/>
            <person name="Lin M.F."/>
            <person name="Heiman D.I."/>
            <person name="Young S.K."/>
            <person name="Furuya K."/>
            <person name="Guo Y."/>
            <person name="Pidoux A."/>
            <person name="Chen H.M."/>
            <person name="Robbertse B."/>
            <person name="Goldberg J.M."/>
            <person name="Aoki K."/>
            <person name="Bayne E.H."/>
            <person name="Berlin A.M."/>
            <person name="Desjardins C.A."/>
            <person name="Dobbs E."/>
            <person name="Dukaj L."/>
            <person name="Fan L."/>
            <person name="FitzGerald M.G."/>
            <person name="French C."/>
            <person name="Gujja S."/>
            <person name="Hansen K."/>
            <person name="Keifenheim D."/>
            <person name="Levin J.Z."/>
            <person name="Mosher R.A."/>
            <person name="Mueller C.A."/>
            <person name="Pfiffner J."/>
            <person name="Priest M."/>
            <person name="Russ C."/>
            <person name="Smialowska A."/>
            <person name="Swoboda P."/>
            <person name="Sykes S.M."/>
            <person name="Vaughn M."/>
            <person name="Vengrova S."/>
            <person name="Yoder R."/>
            <person name="Zeng Q."/>
            <person name="Allshire R."/>
            <person name="Baulcombe D."/>
            <person name="Birren B.W."/>
            <person name="Brown W."/>
            <person name="Ekwall K."/>
            <person name="Kellis M."/>
            <person name="Leatherwood J."/>
            <person name="Levin H."/>
            <person name="Margalit H."/>
            <person name="Martienssen R."/>
            <person name="Nieduszynski C.A."/>
            <person name="Spatafora J.W."/>
            <person name="Friedman N."/>
            <person name="Dalgaard J.Z."/>
            <person name="Baumann P."/>
            <person name="Niki H."/>
            <person name="Regev A."/>
            <person name="Nusbaum C."/>
        </authorList>
    </citation>
    <scope>REVISION OF GENE MODEL</scope>
</reference>
<reference key="3">
    <citation type="journal article" date="2003" name="J. Biol. Chem.">
        <title>Mediator influences Schizosaccharomyces pombe RNA polymerase II-dependent transcription in vitro.</title>
        <authorList>
            <person name="Spaehr H."/>
            <person name="Khorosjutina O."/>
            <person name="Baraznenok V."/>
            <person name="Linder T."/>
            <person name="Samuelsen C.O."/>
            <person name="Hermand D."/>
            <person name="Maekelae T.P."/>
            <person name="Holmberg S."/>
            <person name="Gustafsson C.M."/>
        </authorList>
    </citation>
    <scope>SUBUNIT</scope>
</reference>
<proteinExistence type="evidence at protein level"/>
<accession>O13745</accession>
<comment type="function">
    <text evidence="2">Component of the general transcription and DNA repair factor IIH (TFIIH) core complex, which is involved in general and transcription-coupled nucleotide excision repair (NER) of damaged DNA and, when complexed to TFIIK, in RNA transcription by RNA polymerase II. In NER, TFIIH acts by opening DNA around the lesion to allow the excision of the damaged oligonucleotide and its replacement by a new DNA fragment. In transcription, TFIIH has an essential role in transcription initiation. When the pre-initiation complex (PIC) has been established, TFIIH is required for promoter opening and promoter escape. Phosphorylation of the C-terminal tail (CTD) of the largest subunit of RNA polymerase II by the kinase module TFIIK controls the initiation of transcription.</text>
</comment>
<comment type="subunit">
    <text evidence="5">Component of the 7-subunit TFIIH core complex composed of XPB/ptr8, XPD/rad15, ssl1, tfb1, tfb2, tfb4 and tfb5, which is active in NER. The core complex associates with the 3-subunit CTD-kinase module TFIIK composed of mcs2/cyclin H, mcs6/cdk7 and pmh1/tfb3 to form the 10-subunit holoenzyme (holo-TFIIH) active in transcription.</text>
</comment>
<comment type="subcellular location">
    <subcellularLocation>
        <location evidence="1">Nucleus</location>
    </subcellularLocation>
</comment>
<comment type="similarity">
    <text evidence="6">Belongs to the TFB1 family.</text>
</comment>
<sequence length="533" mass="60600">MGDRVEALAIFRKKQGVLSIDSRLKWTGEGKTTPSVDIAFDAISNLQTTPASNPKVMIRVFIVVKEGEDPTSLVFHFTGTPNARENCDMITNELRNAIQRQREGSQSKPQGANVDRVNSTNLEKDIDLQESLLTNNPDLLQTFKEAVMKGHLSNEQFWSTRLHLLRAHAVERSQQRGPYNVLSTIKPKTVDNQMKVSLTGQQIHDMFEQHPLLRKVYDKHVPPLAEGEFWSRFFLSKLCKKLRGDRITPMDPSDDIMDKYLKDNEEVTKVSDEPIASHLFDLEGNDQNANVIAELRPDITMRIDKEALPFMKNINQLSERLLEKSLGNSKRFNNENEETYLKESGFHDLEEEASDSKVVLKIKGQDQLLENNFVPSKNQVGLEPLPSLEALQHLYQEDSISLNHIEHDSDSLAEAAMQLTQSMREKHEFETHGTASNLPIDIKNEIVLCHTVTIEFLHQFWNALLNTTFPDKKAMAPLQNALLNSKKRVEAIASQAQEQNVDPKLVYELVSCTLTSIDTSISEYQRRMSYPPA</sequence>
<dbReference type="EMBL" id="CU329670">
    <property type="protein sequence ID" value="CAB11039.2"/>
    <property type="molecule type" value="Genomic_DNA"/>
</dbReference>
<dbReference type="PIR" id="T37791">
    <property type="entry name" value="T37791"/>
</dbReference>
<dbReference type="RefSeq" id="NP_594223.2">
    <property type="nucleotide sequence ID" value="NM_001019646.2"/>
</dbReference>
<dbReference type="PDB" id="8I53">
    <property type="method" value="NMR"/>
    <property type="chains" value="A=1-108"/>
</dbReference>
<dbReference type="PDBsum" id="8I53"/>
<dbReference type="SMR" id="O13745"/>
<dbReference type="BioGRID" id="278802">
    <property type="interactions" value="6"/>
</dbReference>
<dbReference type="FunCoup" id="O13745">
    <property type="interactions" value="619"/>
</dbReference>
<dbReference type="IntAct" id="O13745">
    <property type="interactions" value="1"/>
</dbReference>
<dbReference type="STRING" id="284812.O13745"/>
<dbReference type="iPTMnet" id="O13745"/>
<dbReference type="PaxDb" id="4896-SPAC16E8.11c.1"/>
<dbReference type="EnsemblFungi" id="SPAC16E8.11c.1">
    <property type="protein sequence ID" value="SPAC16E8.11c.1:pep"/>
    <property type="gene ID" value="SPAC16E8.11c"/>
</dbReference>
<dbReference type="GeneID" id="2542336"/>
<dbReference type="KEGG" id="spo:2542336"/>
<dbReference type="PomBase" id="SPAC16E8.11c">
    <property type="gene designation" value="tfb1"/>
</dbReference>
<dbReference type="VEuPathDB" id="FungiDB:SPAC16E8.11c"/>
<dbReference type="eggNOG" id="KOG2074">
    <property type="taxonomic scope" value="Eukaryota"/>
</dbReference>
<dbReference type="HOGENOM" id="CLU_019188_0_0_1"/>
<dbReference type="InParanoid" id="O13745"/>
<dbReference type="OMA" id="NRPNFDM"/>
<dbReference type="Reactome" id="R-SPO-113418">
    <property type="pathway name" value="Formation of the Early Elongation Complex"/>
</dbReference>
<dbReference type="Reactome" id="R-SPO-5696395">
    <property type="pathway name" value="Formation of Incision Complex in GG-NER"/>
</dbReference>
<dbReference type="Reactome" id="R-SPO-5696400">
    <property type="pathway name" value="Dual Incision in GG-NER"/>
</dbReference>
<dbReference type="Reactome" id="R-SPO-674695">
    <property type="pathway name" value="RNA Polymerase II Pre-transcription Events"/>
</dbReference>
<dbReference type="Reactome" id="R-SPO-6781823">
    <property type="pathway name" value="Formation of TC-NER Pre-Incision Complex"/>
</dbReference>
<dbReference type="Reactome" id="R-SPO-6782135">
    <property type="pathway name" value="Dual incision in TC-NER"/>
</dbReference>
<dbReference type="Reactome" id="R-SPO-6782210">
    <property type="pathway name" value="Gap-filling DNA repair synthesis and ligation in TC-NER"/>
</dbReference>
<dbReference type="Reactome" id="R-SPO-6796648">
    <property type="pathway name" value="TP53 Regulates Transcription of DNA Repair Genes"/>
</dbReference>
<dbReference type="Reactome" id="R-SPO-72086">
    <property type="pathway name" value="mRNA Capping"/>
</dbReference>
<dbReference type="Reactome" id="R-SPO-73772">
    <property type="pathway name" value="RNA Polymerase I Promoter Escape"/>
</dbReference>
<dbReference type="Reactome" id="R-SPO-73776">
    <property type="pathway name" value="RNA Polymerase II Promoter Escape"/>
</dbReference>
<dbReference type="Reactome" id="R-SPO-73779">
    <property type="pathway name" value="RNA Polymerase II Transcription Pre-Initiation And Promoter Opening"/>
</dbReference>
<dbReference type="Reactome" id="R-SPO-75953">
    <property type="pathway name" value="RNA Polymerase II Transcription Initiation"/>
</dbReference>
<dbReference type="Reactome" id="R-SPO-76042">
    <property type="pathway name" value="RNA Polymerase II Transcription Initiation And Promoter Clearance"/>
</dbReference>
<dbReference type="Reactome" id="R-SPO-77075">
    <property type="pathway name" value="RNA Pol II CTD phosphorylation and interaction with CE"/>
</dbReference>
<dbReference type="PRO" id="PR:O13745"/>
<dbReference type="Proteomes" id="UP000002485">
    <property type="component" value="Chromosome I"/>
</dbReference>
<dbReference type="GO" id="GO:0005737">
    <property type="term" value="C:cytoplasm"/>
    <property type="evidence" value="ECO:0007005"/>
    <property type="project" value="PomBase"/>
</dbReference>
<dbReference type="GO" id="GO:0005829">
    <property type="term" value="C:cytosol"/>
    <property type="evidence" value="ECO:0007005"/>
    <property type="project" value="PomBase"/>
</dbReference>
<dbReference type="GO" id="GO:0000112">
    <property type="term" value="C:nucleotide-excision repair factor 3 complex"/>
    <property type="evidence" value="ECO:0000266"/>
    <property type="project" value="PomBase"/>
</dbReference>
<dbReference type="GO" id="GO:0000439">
    <property type="term" value="C:transcription factor TFIIH core complex"/>
    <property type="evidence" value="ECO:0000314"/>
    <property type="project" value="PomBase"/>
</dbReference>
<dbReference type="GO" id="GO:0005675">
    <property type="term" value="C:transcription factor TFIIH holo complex"/>
    <property type="evidence" value="ECO:0000318"/>
    <property type="project" value="GO_Central"/>
</dbReference>
<dbReference type="GO" id="GO:0016251">
    <property type="term" value="F:RNA polymerase II general transcription initiation factor activity"/>
    <property type="evidence" value="ECO:0000314"/>
    <property type="project" value="PomBase"/>
</dbReference>
<dbReference type="GO" id="GO:0006281">
    <property type="term" value="P:DNA repair"/>
    <property type="evidence" value="ECO:0000318"/>
    <property type="project" value="GO_Central"/>
</dbReference>
<dbReference type="GO" id="GO:0006289">
    <property type="term" value="P:nucleotide-excision repair"/>
    <property type="evidence" value="ECO:0000266"/>
    <property type="project" value="PomBase"/>
</dbReference>
<dbReference type="GO" id="GO:0006360">
    <property type="term" value="P:transcription by RNA polymerase I"/>
    <property type="evidence" value="ECO:0000318"/>
    <property type="project" value="GO_Central"/>
</dbReference>
<dbReference type="GO" id="GO:0006366">
    <property type="term" value="P:transcription by RNA polymerase II"/>
    <property type="evidence" value="ECO:0000318"/>
    <property type="project" value="GO_Central"/>
</dbReference>
<dbReference type="GO" id="GO:0006367">
    <property type="term" value="P:transcription initiation at RNA polymerase II promoter"/>
    <property type="evidence" value="ECO:0000314"/>
    <property type="project" value="PomBase"/>
</dbReference>
<dbReference type="CDD" id="cd13229">
    <property type="entry name" value="PH_TFIIH"/>
    <property type="match status" value="1"/>
</dbReference>
<dbReference type="Gene3D" id="6.10.140.1200">
    <property type="match status" value="1"/>
</dbReference>
<dbReference type="Gene3D" id="2.30.29.30">
    <property type="entry name" value="Pleckstrin-homology domain (PH domain)/Phosphotyrosine-binding domain (PTB)"/>
    <property type="match status" value="1"/>
</dbReference>
<dbReference type="InterPro" id="IPR005607">
    <property type="entry name" value="BSD_dom"/>
</dbReference>
<dbReference type="InterPro" id="IPR035925">
    <property type="entry name" value="BSD_dom_sf"/>
</dbReference>
<dbReference type="InterPro" id="IPR011993">
    <property type="entry name" value="PH-like_dom_sf"/>
</dbReference>
<dbReference type="InterPro" id="IPR027079">
    <property type="entry name" value="Tfb1/GTF2H1"/>
</dbReference>
<dbReference type="InterPro" id="IPR013876">
    <property type="entry name" value="TFIIH_BTF_p62_N"/>
</dbReference>
<dbReference type="PANTHER" id="PTHR12856">
    <property type="entry name" value="TRANSCRIPTION INITIATION FACTOR IIH-RELATED"/>
    <property type="match status" value="1"/>
</dbReference>
<dbReference type="Pfam" id="PF03909">
    <property type="entry name" value="BSD"/>
    <property type="match status" value="2"/>
</dbReference>
<dbReference type="Pfam" id="PF08567">
    <property type="entry name" value="PH_TFIIH"/>
    <property type="match status" value="1"/>
</dbReference>
<dbReference type="SMART" id="SM00751">
    <property type="entry name" value="BSD"/>
    <property type="match status" value="2"/>
</dbReference>
<dbReference type="SUPFAM" id="SSF140383">
    <property type="entry name" value="BSD domain-like"/>
    <property type="match status" value="1"/>
</dbReference>
<dbReference type="SUPFAM" id="SSF50729">
    <property type="entry name" value="PH domain-like"/>
    <property type="match status" value="1"/>
</dbReference>
<dbReference type="PROSITE" id="PS50858">
    <property type="entry name" value="BSD"/>
    <property type="match status" value="2"/>
</dbReference>
<feature type="chain" id="PRO_0000119260" description="General transcription and DNA repair factor IIH subunit tfb1">
    <location>
        <begin position="1"/>
        <end position="533"/>
    </location>
</feature>
<feature type="domain" description="BSD 1" evidence="3">
    <location>
        <begin position="116"/>
        <end position="169"/>
    </location>
</feature>
<feature type="domain" description="BSD 2" evidence="3">
    <location>
        <begin position="190"/>
        <end position="241"/>
    </location>
</feature>
<feature type="region of interest" description="Disordered" evidence="4">
    <location>
        <begin position="100"/>
        <end position="119"/>
    </location>
</feature>
<feature type="compositionally biased region" description="Polar residues" evidence="4">
    <location>
        <begin position="106"/>
        <end position="119"/>
    </location>
</feature>
<feature type="strand" evidence="7">
    <location>
        <begin position="6"/>
        <end position="13"/>
    </location>
</feature>
<feature type="strand" evidence="7">
    <location>
        <begin position="15"/>
        <end position="27"/>
    </location>
</feature>
<feature type="strand" evidence="7">
    <location>
        <begin position="32"/>
        <end position="39"/>
    </location>
</feature>
<feature type="helix" evidence="7">
    <location>
        <begin position="40"/>
        <end position="42"/>
    </location>
</feature>
<feature type="strand" evidence="7">
    <location>
        <begin position="43"/>
        <end position="48"/>
    </location>
</feature>
<feature type="strand" evidence="7">
    <location>
        <begin position="57"/>
        <end position="62"/>
    </location>
</feature>
<feature type="strand" evidence="7">
    <location>
        <begin position="71"/>
        <end position="76"/>
    </location>
</feature>
<feature type="helix" evidence="7">
    <location>
        <begin position="77"/>
        <end position="79"/>
    </location>
</feature>
<feature type="helix" evidence="7">
    <location>
        <begin position="83"/>
        <end position="103"/>
    </location>
</feature>
<name>TFB1_SCHPO</name>
<organism>
    <name type="scientific">Schizosaccharomyces pombe (strain 972 / ATCC 24843)</name>
    <name type="common">Fission yeast</name>
    <dbReference type="NCBI Taxonomy" id="284812"/>
    <lineage>
        <taxon>Eukaryota</taxon>
        <taxon>Fungi</taxon>
        <taxon>Dikarya</taxon>
        <taxon>Ascomycota</taxon>
        <taxon>Taphrinomycotina</taxon>
        <taxon>Schizosaccharomycetes</taxon>
        <taxon>Schizosaccharomycetales</taxon>
        <taxon>Schizosaccharomycetaceae</taxon>
        <taxon>Schizosaccharomyces</taxon>
    </lineage>
</organism>
<protein>
    <recommendedName>
        <fullName>General transcription and DNA repair factor IIH subunit tfb1</fullName>
        <shortName>TFIIH subunit tfb1</shortName>
    </recommendedName>
    <alternativeName>
        <fullName>RNA polymerase II transcription factor B 73 kDa subunit</fullName>
    </alternativeName>
    <alternativeName>
        <fullName>RNA polymerase II transcription factor B p73 subunit</fullName>
    </alternativeName>
    <alternativeName>
        <fullName>RNA polymerase II transcription factor B subunit 1</fullName>
    </alternativeName>
</protein>
<gene>
    <name type="primary">tfb1</name>
    <name type="ORF">SPAC16E8.11c</name>
</gene>
<keyword id="KW-0002">3D-structure</keyword>
<keyword id="KW-0539">Nucleus</keyword>
<keyword id="KW-1185">Reference proteome</keyword>
<keyword id="KW-0677">Repeat</keyword>
<keyword id="KW-0804">Transcription</keyword>
<keyword id="KW-0805">Transcription regulation</keyword>
<evidence type="ECO:0000250" key="1"/>
<evidence type="ECO:0000250" key="2">
    <source>
        <dbReference type="UniProtKB" id="P32776"/>
    </source>
</evidence>
<evidence type="ECO:0000255" key="3">
    <source>
        <dbReference type="PROSITE-ProRule" id="PRU00036"/>
    </source>
</evidence>
<evidence type="ECO:0000256" key="4">
    <source>
        <dbReference type="SAM" id="MobiDB-lite"/>
    </source>
</evidence>
<evidence type="ECO:0000269" key="5">
    <source>
    </source>
</evidence>
<evidence type="ECO:0000305" key="6"/>
<evidence type="ECO:0007829" key="7">
    <source>
        <dbReference type="PDB" id="8I53"/>
    </source>
</evidence>